<comment type="function">
    <text evidence="1">Part of a membrane-bound complex that couples electron transfer with translocation of ions across the membrane.</text>
</comment>
<comment type="subunit">
    <text evidence="1">The complex is composed of six subunits: RnfA, RnfB, RnfC, RnfD, RnfE and RnfG.</text>
</comment>
<comment type="subcellular location">
    <subcellularLocation>
        <location evidence="1">Cell inner membrane</location>
        <topology evidence="1">Multi-pass membrane protein</topology>
    </subcellularLocation>
</comment>
<comment type="similarity">
    <text evidence="1">Belongs to the NqrDE/RnfAE family.</text>
</comment>
<evidence type="ECO:0000255" key="1">
    <source>
        <dbReference type="HAMAP-Rule" id="MF_00459"/>
    </source>
</evidence>
<keyword id="KW-0997">Cell inner membrane</keyword>
<keyword id="KW-1003">Cell membrane</keyword>
<keyword id="KW-0249">Electron transport</keyword>
<keyword id="KW-0472">Membrane</keyword>
<keyword id="KW-1185">Reference proteome</keyword>
<keyword id="KW-1278">Translocase</keyword>
<keyword id="KW-0812">Transmembrane</keyword>
<keyword id="KW-1133">Transmembrane helix</keyword>
<keyword id="KW-0813">Transport</keyword>
<gene>
    <name evidence="1" type="primary">rnfA</name>
    <name type="ordered locus">ESA_01986</name>
</gene>
<name>RNFA_CROS8</name>
<dbReference type="EC" id="7.-.-.-" evidence="1"/>
<dbReference type="EMBL" id="CP000783">
    <property type="protein sequence ID" value="ABU77239.1"/>
    <property type="molecule type" value="Genomic_DNA"/>
</dbReference>
<dbReference type="SMR" id="A7MMM2"/>
<dbReference type="KEGG" id="esa:ESA_01986"/>
<dbReference type="HOGENOM" id="CLU_095255_1_0_6"/>
<dbReference type="Proteomes" id="UP000000260">
    <property type="component" value="Chromosome"/>
</dbReference>
<dbReference type="GO" id="GO:0005886">
    <property type="term" value="C:plasma membrane"/>
    <property type="evidence" value="ECO:0007669"/>
    <property type="project" value="UniProtKB-SubCell"/>
</dbReference>
<dbReference type="GO" id="GO:0022900">
    <property type="term" value="P:electron transport chain"/>
    <property type="evidence" value="ECO:0007669"/>
    <property type="project" value="UniProtKB-UniRule"/>
</dbReference>
<dbReference type="HAMAP" id="MF_00459">
    <property type="entry name" value="RsxA_RnfA"/>
    <property type="match status" value="1"/>
</dbReference>
<dbReference type="InterPro" id="IPR011293">
    <property type="entry name" value="Ion_transpt_RnfA/RsxA"/>
</dbReference>
<dbReference type="InterPro" id="IPR003667">
    <property type="entry name" value="NqrDE/RnfAE"/>
</dbReference>
<dbReference type="InterPro" id="IPR050133">
    <property type="entry name" value="NqrDE/RnfAE_oxidrdctase"/>
</dbReference>
<dbReference type="NCBIfam" id="NF003481">
    <property type="entry name" value="PRK05151.1"/>
    <property type="match status" value="1"/>
</dbReference>
<dbReference type="NCBIfam" id="TIGR01943">
    <property type="entry name" value="rnfA"/>
    <property type="match status" value="1"/>
</dbReference>
<dbReference type="PANTHER" id="PTHR30335">
    <property type="entry name" value="INTEGRAL MEMBRANE PROTEIN OF SOXR-REDUCING COMPLEX"/>
    <property type="match status" value="1"/>
</dbReference>
<dbReference type="PANTHER" id="PTHR30335:SF0">
    <property type="entry name" value="ION-TRANSLOCATING OXIDOREDUCTASE COMPLEX SUBUNIT A"/>
    <property type="match status" value="1"/>
</dbReference>
<dbReference type="Pfam" id="PF02508">
    <property type="entry name" value="Rnf-Nqr"/>
    <property type="match status" value="1"/>
</dbReference>
<dbReference type="PIRSF" id="PIRSF006102">
    <property type="entry name" value="NQR_DE"/>
    <property type="match status" value="1"/>
</dbReference>
<feature type="chain" id="PRO_1000013528" description="Ion-translocating oxidoreductase complex subunit A">
    <location>
        <begin position="1"/>
        <end position="193"/>
    </location>
</feature>
<feature type="transmembrane region" description="Helical" evidence="1">
    <location>
        <begin position="5"/>
        <end position="25"/>
    </location>
</feature>
<feature type="transmembrane region" description="Helical" evidence="1">
    <location>
        <begin position="47"/>
        <end position="67"/>
    </location>
</feature>
<feature type="transmembrane region" description="Helical" evidence="1">
    <location>
        <begin position="72"/>
        <end position="92"/>
    </location>
</feature>
<feature type="transmembrane region" description="Helical" evidence="1">
    <location>
        <begin position="102"/>
        <end position="122"/>
    </location>
</feature>
<feature type="transmembrane region" description="Helical" evidence="1">
    <location>
        <begin position="134"/>
        <end position="154"/>
    </location>
</feature>
<feature type="transmembrane region" description="Helical" evidence="1">
    <location>
        <begin position="171"/>
        <end position="191"/>
    </location>
</feature>
<accession>A7MMM2</accession>
<reference key="1">
    <citation type="journal article" date="2010" name="PLoS ONE">
        <title>Genome sequence of Cronobacter sakazakii BAA-894 and comparative genomic hybridization analysis with other Cronobacter species.</title>
        <authorList>
            <person name="Kucerova E."/>
            <person name="Clifton S.W."/>
            <person name="Xia X.Q."/>
            <person name="Long F."/>
            <person name="Porwollik S."/>
            <person name="Fulton L."/>
            <person name="Fronick C."/>
            <person name="Minx P."/>
            <person name="Kyung K."/>
            <person name="Warren W."/>
            <person name="Fulton R."/>
            <person name="Feng D."/>
            <person name="Wollam A."/>
            <person name="Shah N."/>
            <person name="Bhonagiri V."/>
            <person name="Nash W.E."/>
            <person name="Hallsworth-Pepin K."/>
            <person name="Wilson R.K."/>
            <person name="McClelland M."/>
            <person name="Forsythe S.J."/>
        </authorList>
    </citation>
    <scope>NUCLEOTIDE SEQUENCE [LARGE SCALE GENOMIC DNA]</scope>
    <source>
        <strain>ATCC BAA-894</strain>
    </source>
</reference>
<organism>
    <name type="scientific">Cronobacter sakazakii (strain ATCC BAA-894)</name>
    <name type="common">Enterobacter sakazakii</name>
    <dbReference type="NCBI Taxonomy" id="290339"/>
    <lineage>
        <taxon>Bacteria</taxon>
        <taxon>Pseudomonadati</taxon>
        <taxon>Pseudomonadota</taxon>
        <taxon>Gammaproteobacteria</taxon>
        <taxon>Enterobacterales</taxon>
        <taxon>Enterobacteriaceae</taxon>
        <taxon>Cronobacter</taxon>
    </lineage>
</organism>
<proteinExistence type="inferred from homology"/>
<sequence>MTDYLLLFVGTVLVNNFVLVKFLGLCPFMGVSKKLESAIGMGMATTFVMTLATIFSWIIDHLILVPLELVYLRTMAFILVIAVVVQFTEMVVRKTSPALYRLLGIYLPLITTNCAVLGVALLSINLNHTFMQSALYGFSAAVGFSLVMVLFAAIRERLVVADVPLPFRGNAIALVTAGLMSLAFMGFSGLVKF</sequence>
<protein>
    <recommendedName>
        <fullName evidence="1">Ion-translocating oxidoreductase complex subunit A</fullName>
        <ecNumber evidence="1">7.-.-.-</ecNumber>
    </recommendedName>
    <alternativeName>
        <fullName evidence="1">Rnf electron transport complex subunit A</fullName>
    </alternativeName>
</protein>